<comment type="function">
    <text evidence="1">Major role in the synthesis of nucleoside triphosphates other than ATP. The ATP gamma phosphate is transferred to the NDP beta phosphate via a ping-pong mechanism, using a phosphorylated active-site intermediate.</text>
</comment>
<comment type="catalytic activity">
    <reaction evidence="1">
        <text>a 2'-deoxyribonucleoside 5'-diphosphate + ATP = a 2'-deoxyribonucleoside 5'-triphosphate + ADP</text>
        <dbReference type="Rhea" id="RHEA:44640"/>
        <dbReference type="ChEBI" id="CHEBI:30616"/>
        <dbReference type="ChEBI" id="CHEBI:61560"/>
        <dbReference type="ChEBI" id="CHEBI:73316"/>
        <dbReference type="ChEBI" id="CHEBI:456216"/>
        <dbReference type="EC" id="2.7.4.6"/>
    </reaction>
</comment>
<comment type="catalytic activity">
    <reaction evidence="1">
        <text>a ribonucleoside 5'-diphosphate + ATP = a ribonucleoside 5'-triphosphate + ADP</text>
        <dbReference type="Rhea" id="RHEA:18113"/>
        <dbReference type="ChEBI" id="CHEBI:30616"/>
        <dbReference type="ChEBI" id="CHEBI:57930"/>
        <dbReference type="ChEBI" id="CHEBI:61557"/>
        <dbReference type="ChEBI" id="CHEBI:456216"/>
        <dbReference type="EC" id="2.7.4.6"/>
    </reaction>
</comment>
<comment type="cofactor">
    <cofactor evidence="1">
        <name>Mg(2+)</name>
        <dbReference type="ChEBI" id="CHEBI:18420"/>
    </cofactor>
</comment>
<comment type="subunit">
    <text evidence="1">Homotetramer.</text>
</comment>
<comment type="subcellular location">
    <subcellularLocation>
        <location evidence="1">Cytoplasm</location>
    </subcellularLocation>
</comment>
<comment type="similarity">
    <text evidence="1">Belongs to the NDK family.</text>
</comment>
<accession>Q3J2D0</accession>
<evidence type="ECO:0000255" key="1">
    <source>
        <dbReference type="HAMAP-Rule" id="MF_00451"/>
    </source>
</evidence>
<keyword id="KW-0067">ATP-binding</keyword>
<keyword id="KW-0963">Cytoplasm</keyword>
<keyword id="KW-0418">Kinase</keyword>
<keyword id="KW-0460">Magnesium</keyword>
<keyword id="KW-0479">Metal-binding</keyword>
<keyword id="KW-0546">Nucleotide metabolism</keyword>
<keyword id="KW-0547">Nucleotide-binding</keyword>
<keyword id="KW-0597">Phosphoprotein</keyword>
<keyword id="KW-1185">Reference proteome</keyword>
<keyword id="KW-0808">Transferase</keyword>
<name>NDK_CERS4</name>
<dbReference type="EC" id="2.7.4.6" evidence="1"/>
<dbReference type="EMBL" id="CP000143">
    <property type="protein sequence ID" value="ABA79054.1"/>
    <property type="molecule type" value="Genomic_DNA"/>
</dbReference>
<dbReference type="RefSeq" id="WP_002720049.1">
    <property type="nucleotide sequence ID" value="NZ_CP030271.1"/>
</dbReference>
<dbReference type="RefSeq" id="YP_352955.1">
    <property type="nucleotide sequence ID" value="NC_007493.2"/>
</dbReference>
<dbReference type="SMR" id="Q3J2D0"/>
<dbReference type="STRING" id="272943.RSP_2894"/>
<dbReference type="EnsemblBacteria" id="ABA79054">
    <property type="protein sequence ID" value="ABA79054"/>
    <property type="gene ID" value="RSP_2894"/>
</dbReference>
<dbReference type="GeneID" id="67446634"/>
<dbReference type="KEGG" id="rsp:RSP_2894"/>
<dbReference type="PATRIC" id="fig|272943.9.peg.1830"/>
<dbReference type="eggNOG" id="COG0105">
    <property type="taxonomic scope" value="Bacteria"/>
</dbReference>
<dbReference type="OrthoDB" id="9801161at2"/>
<dbReference type="PhylomeDB" id="Q3J2D0"/>
<dbReference type="Proteomes" id="UP000002703">
    <property type="component" value="Chromosome 1"/>
</dbReference>
<dbReference type="GO" id="GO:0005737">
    <property type="term" value="C:cytoplasm"/>
    <property type="evidence" value="ECO:0007669"/>
    <property type="project" value="UniProtKB-SubCell"/>
</dbReference>
<dbReference type="GO" id="GO:0005524">
    <property type="term" value="F:ATP binding"/>
    <property type="evidence" value="ECO:0007669"/>
    <property type="project" value="UniProtKB-UniRule"/>
</dbReference>
<dbReference type="GO" id="GO:0046872">
    <property type="term" value="F:metal ion binding"/>
    <property type="evidence" value="ECO:0007669"/>
    <property type="project" value="UniProtKB-KW"/>
</dbReference>
<dbReference type="GO" id="GO:0004550">
    <property type="term" value="F:nucleoside diphosphate kinase activity"/>
    <property type="evidence" value="ECO:0007669"/>
    <property type="project" value="UniProtKB-UniRule"/>
</dbReference>
<dbReference type="GO" id="GO:0006241">
    <property type="term" value="P:CTP biosynthetic process"/>
    <property type="evidence" value="ECO:0007669"/>
    <property type="project" value="UniProtKB-UniRule"/>
</dbReference>
<dbReference type="GO" id="GO:0006183">
    <property type="term" value="P:GTP biosynthetic process"/>
    <property type="evidence" value="ECO:0007669"/>
    <property type="project" value="UniProtKB-UniRule"/>
</dbReference>
<dbReference type="GO" id="GO:0006228">
    <property type="term" value="P:UTP biosynthetic process"/>
    <property type="evidence" value="ECO:0007669"/>
    <property type="project" value="UniProtKB-UniRule"/>
</dbReference>
<dbReference type="CDD" id="cd04413">
    <property type="entry name" value="NDPk_I"/>
    <property type="match status" value="1"/>
</dbReference>
<dbReference type="FunFam" id="3.30.70.141:FF:000003">
    <property type="entry name" value="Nucleoside diphosphate kinase"/>
    <property type="match status" value="1"/>
</dbReference>
<dbReference type="Gene3D" id="3.30.70.141">
    <property type="entry name" value="Nucleoside diphosphate kinase-like domain"/>
    <property type="match status" value="1"/>
</dbReference>
<dbReference type="HAMAP" id="MF_00451">
    <property type="entry name" value="NDP_kinase"/>
    <property type="match status" value="1"/>
</dbReference>
<dbReference type="InterPro" id="IPR034907">
    <property type="entry name" value="NDK-like_dom"/>
</dbReference>
<dbReference type="InterPro" id="IPR036850">
    <property type="entry name" value="NDK-like_dom_sf"/>
</dbReference>
<dbReference type="InterPro" id="IPR001564">
    <property type="entry name" value="Nucleoside_diP_kinase"/>
</dbReference>
<dbReference type="InterPro" id="IPR023005">
    <property type="entry name" value="Nucleoside_diP_kinase_AS"/>
</dbReference>
<dbReference type="NCBIfam" id="NF001908">
    <property type="entry name" value="PRK00668.1"/>
    <property type="match status" value="1"/>
</dbReference>
<dbReference type="PANTHER" id="PTHR46161">
    <property type="entry name" value="NUCLEOSIDE DIPHOSPHATE KINASE"/>
    <property type="match status" value="1"/>
</dbReference>
<dbReference type="PANTHER" id="PTHR46161:SF3">
    <property type="entry name" value="NUCLEOSIDE DIPHOSPHATE KINASE DDB_G0292928-RELATED"/>
    <property type="match status" value="1"/>
</dbReference>
<dbReference type="Pfam" id="PF00334">
    <property type="entry name" value="NDK"/>
    <property type="match status" value="1"/>
</dbReference>
<dbReference type="PRINTS" id="PR01243">
    <property type="entry name" value="NUCDPKINASE"/>
</dbReference>
<dbReference type="SMART" id="SM00562">
    <property type="entry name" value="NDK"/>
    <property type="match status" value="1"/>
</dbReference>
<dbReference type="SUPFAM" id="SSF54919">
    <property type="entry name" value="Nucleoside diphosphate kinase, NDK"/>
    <property type="match status" value="1"/>
</dbReference>
<dbReference type="PROSITE" id="PS00469">
    <property type="entry name" value="NDPK"/>
    <property type="match status" value="1"/>
</dbReference>
<dbReference type="PROSITE" id="PS51374">
    <property type="entry name" value="NDPK_LIKE"/>
    <property type="match status" value="1"/>
</dbReference>
<organism>
    <name type="scientific">Cereibacter sphaeroides (strain ATCC 17023 / DSM 158 / JCM 6121 / CCUG 31486 / LMG 2827 / NBRC 12203 / NCIMB 8253 / ATH 2.4.1.)</name>
    <name type="common">Rhodobacter sphaeroides</name>
    <dbReference type="NCBI Taxonomy" id="272943"/>
    <lineage>
        <taxon>Bacteria</taxon>
        <taxon>Pseudomonadati</taxon>
        <taxon>Pseudomonadota</taxon>
        <taxon>Alphaproteobacteria</taxon>
        <taxon>Rhodobacterales</taxon>
        <taxon>Paracoccaceae</taxon>
        <taxon>Cereibacter</taxon>
    </lineage>
</organism>
<gene>
    <name evidence="1" type="primary">ndk</name>
    <name type="ordered locus">RHOS4_14860</name>
    <name type="ORF">RSP_2894</name>
</gene>
<protein>
    <recommendedName>
        <fullName evidence="1">Nucleoside diphosphate kinase</fullName>
        <shortName evidence="1">NDK</shortName>
        <shortName evidence="1">NDP kinase</shortName>
        <ecNumber evidence="1">2.7.4.6</ecNumber>
    </recommendedName>
    <alternativeName>
        <fullName evidence="1">Nucleoside-2-P kinase</fullName>
    </alternativeName>
</protein>
<proteinExistence type="inferred from homology"/>
<feature type="chain" id="PRO_0000226576" description="Nucleoside diphosphate kinase">
    <location>
        <begin position="1"/>
        <end position="140"/>
    </location>
</feature>
<feature type="active site" description="Pros-phosphohistidine intermediate" evidence="1">
    <location>
        <position position="117"/>
    </location>
</feature>
<feature type="binding site" evidence="1">
    <location>
        <position position="11"/>
    </location>
    <ligand>
        <name>ATP</name>
        <dbReference type="ChEBI" id="CHEBI:30616"/>
    </ligand>
</feature>
<feature type="binding site" evidence="1">
    <location>
        <position position="59"/>
    </location>
    <ligand>
        <name>ATP</name>
        <dbReference type="ChEBI" id="CHEBI:30616"/>
    </ligand>
</feature>
<feature type="binding site" evidence="1">
    <location>
        <position position="87"/>
    </location>
    <ligand>
        <name>ATP</name>
        <dbReference type="ChEBI" id="CHEBI:30616"/>
    </ligand>
</feature>
<feature type="binding site" evidence="1">
    <location>
        <position position="93"/>
    </location>
    <ligand>
        <name>ATP</name>
        <dbReference type="ChEBI" id="CHEBI:30616"/>
    </ligand>
</feature>
<feature type="binding site" evidence="1">
    <location>
        <position position="104"/>
    </location>
    <ligand>
        <name>ATP</name>
        <dbReference type="ChEBI" id="CHEBI:30616"/>
    </ligand>
</feature>
<feature type="binding site" evidence="1">
    <location>
        <position position="114"/>
    </location>
    <ligand>
        <name>ATP</name>
        <dbReference type="ChEBI" id="CHEBI:30616"/>
    </ligand>
</feature>
<sequence length="140" mass="15159">MAIERTLSIIKPDATRRNLTGKINAKFEEAGLRIVAQKRIHLSLAQAQKFYGVHKDRPFFGELTEFMASEPVVVQVLEGEGAIAKNREVMGATNPANADAGTIRKEFALSVGENSVHGSDAPETAAEEIAFFFSGLELVG</sequence>
<reference key="1">
    <citation type="submission" date="2005-09" db="EMBL/GenBank/DDBJ databases">
        <title>Complete sequence of chromosome 1 of Rhodobacter sphaeroides 2.4.1.</title>
        <authorList>
            <person name="Copeland A."/>
            <person name="Lucas S."/>
            <person name="Lapidus A."/>
            <person name="Barry K."/>
            <person name="Detter J.C."/>
            <person name="Glavina T."/>
            <person name="Hammon N."/>
            <person name="Israni S."/>
            <person name="Pitluck S."/>
            <person name="Richardson P."/>
            <person name="Mackenzie C."/>
            <person name="Choudhary M."/>
            <person name="Larimer F."/>
            <person name="Hauser L.J."/>
            <person name="Land M."/>
            <person name="Donohue T.J."/>
            <person name="Kaplan S."/>
        </authorList>
    </citation>
    <scope>NUCLEOTIDE SEQUENCE [LARGE SCALE GENOMIC DNA]</scope>
    <source>
        <strain>ATCC 17023 / DSM 158 / JCM 6121 / CCUG 31486 / LMG 2827 / NBRC 12203 / NCIMB 8253 / ATH 2.4.1.</strain>
    </source>
</reference>